<dbReference type="EMBL" id="L10193">
    <property type="protein sequence ID" value="AAA23130.1"/>
    <property type="molecule type" value="Genomic_DNA"/>
</dbReference>
<dbReference type="EMBL" id="AM884176">
    <property type="protein sequence ID" value="CAP03741.1"/>
    <property type="status" value="ALT_INIT"/>
    <property type="molecule type" value="Genomic_DNA"/>
</dbReference>
<dbReference type="PIR" id="A36884">
    <property type="entry name" value="A36884"/>
</dbReference>
<dbReference type="RefSeq" id="WP_009873517.1">
    <property type="nucleotide sequence ID" value="NC_010287.1"/>
</dbReference>
<dbReference type="RefSeq" id="YP_001654385.1">
    <property type="nucleotide sequence ID" value="NC_010287.1"/>
</dbReference>
<dbReference type="KEGG" id="ctb:CTL0302"/>
<dbReference type="PATRIC" id="fig|471472.4.peg.327"/>
<dbReference type="HOGENOM" id="CLU_101293_0_0_0"/>
<dbReference type="Proteomes" id="UP001154402">
    <property type="component" value="Chromosome"/>
</dbReference>
<dbReference type="GO" id="GO:0003677">
    <property type="term" value="F:DNA binding"/>
    <property type="evidence" value="ECO:0007669"/>
    <property type="project" value="UniProtKB-KW"/>
</dbReference>
<dbReference type="GO" id="GO:0030527">
    <property type="term" value="F:structural constituent of chromatin"/>
    <property type="evidence" value="ECO:0007669"/>
    <property type="project" value="InterPro"/>
</dbReference>
<dbReference type="GO" id="GO:0030261">
    <property type="term" value="P:chromosome condensation"/>
    <property type="evidence" value="ECO:0007669"/>
    <property type="project" value="InterPro"/>
</dbReference>
<dbReference type="InterPro" id="IPR009970">
    <property type="entry name" value="HC2"/>
</dbReference>
<dbReference type="NCBIfam" id="NF038052">
    <property type="entry name" value="histone_lik_HC2"/>
    <property type="match status" value="2"/>
</dbReference>
<dbReference type="Pfam" id="PF07382">
    <property type="entry name" value="HC2"/>
    <property type="match status" value="2"/>
</dbReference>
<keyword id="KW-0238">DNA-binding</keyword>
<keyword id="KW-0677">Repeat</keyword>
<organism>
    <name type="scientific">Chlamydia trachomatis serovar L2 (strain ATCC VR-902B / DSM 19102 / 434/Bu)</name>
    <dbReference type="NCBI Taxonomy" id="471472"/>
    <lineage>
        <taxon>Bacteria</taxon>
        <taxon>Pseudomonadati</taxon>
        <taxon>Chlamydiota</taxon>
        <taxon>Chlamydiia</taxon>
        <taxon>Chlamydiales</taxon>
        <taxon>Chlamydiaceae</taxon>
        <taxon>Chlamydia/Chlamydophila group</taxon>
        <taxon>Chlamydia</taxon>
    </lineage>
</organism>
<reference key="1">
    <citation type="journal article" date="1993" name="J. Bacteriol.">
        <title>Molecular cloning and expression of hctB encoding a strain-variant chlamydial histone-like protein with DNA-binding activity.</title>
        <authorList>
            <person name="Brickman T.J."/>
            <person name="Barry C.E. III"/>
            <person name="Hackstadt T.W."/>
        </authorList>
    </citation>
    <scope>NUCLEOTIDE SEQUENCE [GENOMIC DNA]</scope>
</reference>
<reference key="2">
    <citation type="journal article" date="2008" name="Genome Res.">
        <title>Chlamydia trachomatis: genome sequence analysis of lymphogranuloma venereum isolates.</title>
        <authorList>
            <person name="Thomson N.R."/>
            <person name="Holden M.T.G."/>
            <person name="Carder C."/>
            <person name="Lennard N."/>
            <person name="Lockey S.J."/>
            <person name="Marsh P."/>
            <person name="Skipp P."/>
            <person name="O'Connor C.D."/>
            <person name="Goodhead I."/>
            <person name="Norbertzcak H."/>
            <person name="Harris B."/>
            <person name="Ormond D."/>
            <person name="Rance R."/>
            <person name="Quail M.A."/>
            <person name="Parkhill J."/>
            <person name="Stephens R.S."/>
            <person name="Clarke I.N."/>
        </authorList>
    </citation>
    <scope>NUCLEOTIDE SEQUENCE [LARGE SCALE GENOMIC DNA]</scope>
    <source>
        <strain>ATCC VR-902B / DSM 19102 / 434/Bu</strain>
    </source>
</reference>
<accession>Q46397</accession>
<accession>B0B9F4</accession>
<name>HCT2_CHLT2</name>
<comment type="function">
    <text>Might have a role in establishing the nucleoid structure of elementary bodies.</text>
</comment>
<comment type="developmental stage">
    <text>Specific to the EB (elementary body) form in the life cycle of chlamydiae.</text>
</comment>
<comment type="similarity">
    <text evidence="2">Belongs to the histone H1/H5 family. HCT subfamily.</text>
</comment>
<comment type="sequence caution" evidence="2">
    <conflict type="erroneous initiation">
        <sequence resource="EMBL-CDS" id="CAP03741"/>
    </conflict>
</comment>
<protein>
    <recommendedName>
        <fullName>Histone H1-like protein HC2</fullName>
    </recommendedName>
    <alternativeName>
        <fullName>HC2 nucleoprotein</fullName>
    </alternativeName>
</protein>
<evidence type="ECO:0000256" key="1">
    <source>
        <dbReference type="SAM" id="MobiDB-lite"/>
    </source>
</evidence>
<evidence type="ECO:0000305" key="2"/>
<gene>
    <name type="primary">hctB</name>
    <name type="synonym">hct2</name>
    <name type="ordered locus">CTL0302</name>
</gene>
<feature type="chain" id="PRO_0000196024" description="Histone H1-like protein HC2">
    <location>
        <begin position="1"/>
        <end position="221"/>
    </location>
</feature>
<feature type="region of interest" description="Disordered" evidence="1">
    <location>
        <begin position="1"/>
        <end position="70"/>
    </location>
</feature>
<feature type="compositionally biased region" description="Basic residues" evidence="1">
    <location>
        <begin position="1"/>
        <end position="50"/>
    </location>
</feature>
<feature type="compositionally biased region" description="Basic residues" evidence="1">
    <location>
        <begin position="59"/>
        <end position="70"/>
    </location>
</feature>
<proteinExistence type="evidence at transcript level"/>
<sequence>MLGVQKKRSTRKTAARKTVVRKPAAKKTAAKKAPVRKVAAKKTVARKTVAKKTVAARKPVAKKATAKKAPVRKAVAKKTVARKTVAKKTVAARKPVAKKATAKKAPVRKVAAKKTVARKTVAKKTVAARKPVAKKATAKKAPVRKAVAKKTVAKRVASTKKSSVAVKAGVCMKKHKHTAACGRVAASGVKVCASAAKRKMNPNRSRTAHSWRQQLMKLVAR</sequence>